<organism>
    <name type="scientific">Staphylococcus aureus (strain Mu50 / ATCC 700699)</name>
    <dbReference type="NCBI Taxonomy" id="158878"/>
    <lineage>
        <taxon>Bacteria</taxon>
        <taxon>Bacillati</taxon>
        <taxon>Bacillota</taxon>
        <taxon>Bacilli</taxon>
        <taxon>Bacillales</taxon>
        <taxon>Staphylococcaceae</taxon>
        <taxon>Staphylococcus</taxon>
    </lineage>
</organism>
<feature type="chain" id="PRO_0000107758" description="Nucleotide-binding protein SAV0765">
    <location>
        <begin position="1"/>
        <end position="303"/>
    </location>
</feature>
<feature type="binding site" evidence="1">
    <location>
        <begin position="18"/>
        <end position="25"/>
    </location>
    <ligand>
        <name>ATP</name>
        <dbReference type="ChEBI" id="CHEBI:30616"/>
    </ligand>
</feature>
<feature type="binding site" evidence="1">
    <location>
        <begin position="69"/>
        <end position="72"/>
    </location>
    <ligand>
        <name>GTP</name>
        <dbReference type="ChEBI" id="CHEBI:37565"/>
    </ligand>
</feature>
<gene>
    <name type="ordered locus">SAV0765</name>
</gene>
<keyword id="KW-0067">ATP-binding</keyword>
<keyword id="KW-0342">GTP-binding</keyword>
<keyword id="KW-0547">Nucleotide-binding</keyword>
<protein>
    <recommendedName>
        <fullName evidence="1">Nucleotide-binding protein SAV0765</fullName>
    </recommendedName>
</protein>
<name>Y765_STAAM</name>
<evidence type="ECO:0000255" key="1">
    <source>
        <dbReference type="HAMAP-Rule" id="MF_00636"/>
    </source>
</evidence>
<comment type="function">
    <text evidence="1">Displays ATPase and GTPase activities.</text>
</comment>
<comment type="similarity">
    <text evidence="1">Belongs to the RapZ-like family.</text>
</comment>
<reference key="1">
    <citation type="journal article" date="2001" name="Lancet">
        <title>Whole genome sequencing of meticillin-resistant Staphylococcus aureus.</title>
        <authorList>
            <person name="Kuroda M."/>
            <person name="Ohta T."/>
            <person name="Uchiyama I."/>
            <person name="Baba T."/>
            <person name="Yuzawa H."/>
            <person name="Kobayashi I."/>
            <person name="Cui L."/>
            <person name="Oguchi A."/>
            <person name="Aoki K."/>
            <person name="Nagai Y."/>
            <person name="Lian J.-Q."/>
            <person name="Ito T."/>
            <person name="Kanamori M."/>
            <person name="Matsumaru H."/>
            <person name="Maruyama A."/>
            <person name="Murakami H."/>
            <person name="Hosoyama A."/>
            <person name="Mizutani-Ui Y."/>
            <person name="Takahashi N.K."/>
            <person name="Sawano T."/>
            <person name="Inoue R."/>
            <person name="Kaito C."/>
            <person name="Sekimizu K."/>
            <person name="Hirakawa H."/>
            <person name="Kuhara S."/>
            <person name="Goto S."/>
            <person name="Yabuzaki J."/>
            <person name="Kanehisa M."/>
            <person name="Yamashita A."/>
            <person name="Oshima K."/>
            <person name="Furuya K."/>
            <person name="Yoshino C."/>
            <person name="Shiba T."/>
            <person name="Hattori M."/>
            <person name="Ogasawara N."/>
            <person name="Hayashi H."/>
            <person name="Hiramatsu K."/>
        </authorList>
    </citation>
    <scope>NUCLEOTIDE SEQUENCE [LARGE SCALE GENOMIC DNA]</scope>
    <source>
        <strain>Mu50 / ATCC 700699</strain>
    </source>
</reference>
<accession>P67108</accession>
<accession>Q99VL1</accession>
<dbReference type="EMBL" id="BA000017">
    <property type="protein sequence ID" value="BAB56927.1"/>
    <property type="molecule type" value="Genomic_DNA"/>
</dbReference>
<dbReference type="SMR" id="P67108"/>
<dbReference type="KEGG" id="sav:SAV0765"/>
<dbReference type="HOGENOM" id="CLU_059558_0_0_9"/>
<dbReference type="PhylomeDB" id="P67108"/>
<dbReference type="Proteomes" id="UP000002481">
    <property type="component" value="Chromosome"/>
</dbReference>
<dbReference type="GO" id="GO:0005524">
    <property type="term" value="F:ATP binding"/>
    <property type="evidence" value="ECO:0007669"/>
    <property type="project" value="UniProtKB-UniRule"/>
</dbReference>
<dbReference type="GO" id="GO:0005525">
    <property type="term" value="F:GTP binding"/>
    <property type="evidence" value="ECO:0007669"/>
    <property type="project" value="UniProtKB-UniRule"/>
</dbReference>
<dbReference type="Gene3D" id="3.40.50.300">
    <property type="entry name" value="P-loop containing nucleotide triphosphate hydrolases"/>
    <property type="match status" value="1"/>
</dbReference>
<dbReference type="HAMAP" id="MF_00636">
    <property type="entry name" value="RapZ_like"/>
    <property type="match status" value="1"/>
</dbReference>
<dbReference type="InterPro" id="IPR027417">
    <property type="entry name" value="P-loop_NTPase"/>
</dbReference>
<dbReference type="InterPro" id="IPR005337">
    <property type="entry name" value="RapZ-like"/>
</dbReference>
<dbReference type="InterPro" id="IPR053930">
    <property type="entry name" value="RapZ-like_N"/>
</dbReference>
<dbReference type="InterPro" id="IPR053931">
    <property type="entry name" value="RapZ_C"/>
</dbReference>
<dbReference type="NCBIfam" id="NF003828">
    <property type="entry name" value="PRK05416.1"/>
    <property type="match status" value="1"/>
</dbReference>
<dbReference type="PANTHER" id="PTHR30448">
    <property type="entry name" value="RNASE ADAPTER PROTEIN RAPZ"/>
    <property type="match status" value="1"/>
</dbReference>
<dbReference type="PANTHER" id="PTHR30448:SF0">
    <property type="entry name" value="RNASE ADAPTER PROTEIN RAPZ"/>
    <property type="match status" value="1"/>
</dbReference>
<dbReference type="Pfam" id="PF22740">
    <property type="entry name" value="PapZ_C"/>
    <property type="match status" value="1"/>
</dbReference>
<dbReference type="Pfam" id="PF03668">
    <property type="entry name" value="RapZ-like_N"/>
    <property type="match status" value="1"/>
</dbReference>
<dbReference type="PIRSF" id="PIRSF005052">
    <property type="entry name" value="P-loopkin"/>
    <property type="match status" value="1"/>
</dbReference>
<dbReference type="SUPFAM" id="SSF52540">
    <property type="entry name" value="P-loop containing nucleoside triphosphate hydrolases"/>
    <property type="match status" value="1"/>
</dbReference>
<proteinExistence type="inferred from homology"/>
<sequence>MDNNEKEKSKSELLVVTGLSGAGKSLVIQCLEDMGYFCVDNLPPVLLPKFVELMEQGNPSLRKVAIAIDLRGKELFNSLVAVVDKVKSESDVIIDVMFLEASTEKLISRYKETRRAHPLMEQGKRSLINAINDEREHLSQIRSIANFVIDTTKLSPKELKERIRRYYEDEEFETFTINVTSFGFKHGIQMDADLVFDVRFLPNPYYVVDLRPLTGLDKDVYNYVMKWKETEIFFEKLTDLLDFMIPGYKKEGKSQLVIAIGCTGGQHRSVALAERLGNYLNEVFEYNVYVHHRDAHIESGEKK</sequence>